<feature type="chain" id="PRO_1000091977" description="DNA-directed RNA polymerase subunit alpha">
    <location>
        <begin position="1"/>
        <end position="332"/>
    </location>
</feature>
<feature type="region of interest" description="Alpha N-terminal domain (alpha-NTD)" evidence="1">
    <location>
        <begin position="1"/>
        <end position="234"/>
    </location>
</feature>
<feature type="region of interest" description="Alpha C-terminal domain (alpha-CTD)" evidence="1">
    <location>
        <begin position="248"/>
        <end position="332"/>
    </location>
</feature>
<protein>
    <recommendedName>
        <fullName evidence="1">DNA-directed RNA polymerase subunit alpha</fullName>
        <shortName evidence="1">RNAP subunit alpha</shortName>
        <ecNumber evidence="1">2.7.7.6</ecNumber>
    </recommendedName>
    <alternativeName>
        <fullName evidence="1">RNA polymerase subunit alpha</fullName>
    </alternativeName>
    <alternativeName>
        <fullName evidence="1">Transcriptase subunit alpha</fullName>
    </alternativeName>
</protein>
<accession>B0U5M3</accession>
<keyword id="KW-0240">DNA-directed RNA polymerase</keyword>
<keyword id="KW-0548">Nucleotidyltransferase</keyword>
<keyword id="KW-0804">Transcription</keyword>
<keyword id="KW-0808">Transferase</keyword>
<reference key="1">
    <citation type="journal article" date="2010" name="J. Bacteriol.">
        <title>Whole genome sequences of two Xylella fastidiosa strains (M12 and M23) causing almond leaf scorch disease in California.</title>
        <authorList>
            <person name="Chen J."/>
            <person name="Xie G."/>
            <person name="Han S."/>
            <person name="Chertkov O."/>
            <person name="Sims D."/>
            <person name="Civerolo E.L."/>
        </authorList>
    </citation>
    <scope>NUCLEOTIDE SEQUENCE [LARGE SCALE GENOMIC DNA]</scope>
    <source>
        <strain>M12</strain>
    </source>
</reference>
<dbReference type="EC" id="2.7.7.6" evidence="1"/>
<dbReference type="EMBL" id="CP000941">
    <property type="protein sequence ID" value="ACA11527.1"/>
    <property type="molecule type" value="Genomic_DNA"/>
</dbReference>
<dbReference type="RefSeq" id="WP_004086545.1">
    <property type="nucleotide sequence ID" value="NC_010513.1"/>
</dbReference>
<dbReference type="SMR" id="B0U5M3"/>
<dbReference type="KEGG" id="xfm:Xfasm12_0518"/>
<dbReference type="HOGENOM" id="CLU_053084_0_0_6"/>
<dbReference type="GO" id="GO:0005737">
    <property type="term" value="C:cytoplasm"/>
    <property type="evidence" value="ECO:0007669"/>
    <property type="project" value="UniProtKB-ARBA"/>
</dbReference>
<dbReference type="GO" id="GO:0000428">
    <property type="term" value="C:DNA-directed RNA polymerase complex"/>
    <property type="evidence" value="ECO:0007669"/>
    <property type="project" value="UniProtKB-KW"/>
</dbReference>
<dbReference type="GO" id="GO:0003677">
    <property type="term" value="F:DNA binding"/>
    <property type="evidence" value="ECO:0007669"/>
    <property type="project" value="UniProtKB-UniRule"/>
</dbReference>
<dbReference type="GO" id="GO:0003899">
    <property type="term" value="F:DNA-directed RNA polymerase activity"/>
    <property type="evidence" value="ECO:0007669"/>
    <property type="project" value="UniProtKB-UniRule"/>
</dbReference>
<dbReference type="GO" id="GO:0046983">
    <property type="term" value="F:protein dimerization activity"/>
    <property type="evidence" value="ECO:0007669"/>
    <property type="project" value="InterPro"/>
</dbReference>
<dbReference type="GO" id="GO:0006351">
    <property type="term" value="P:DNA-templated transcription"/>
    <property type="evidence" value="ECO:0007669"/>
    <property type="project" value="UniProtKB-UniRule"/>
</dbReference>
<dbReference type="CDD" id="cd06928">
    <property type="entry name" value="RNAP_alpha_NTD"/>
    <property type="match status" value="1"/>
</dbReference>
<dbReference type="FunFam" id="1.10.150.20:FF:000001">
    <property type="entry name" value="DNA-directed RNA polymerase subunit alpha"/>
    <property type="match status" value="1"/>
</dbReference>
<dbReference type="FunFam" id="2.170.120.12:FF:000001">
    <property type="entry name" value="DNA-directed RNA polymerase subunit alpha"/>
    <property type="match status" value="1"/>
</dbReference>
<dbReference type="Gene3D" id="1.10.150.20">
    <property type="entry name" value="5' to 3' exonuclease, C-terminal subdomain"/>
    <property type="match status" value="1"/>
</dbReference>
<dbReference type="Gene3D" id="2.170.120.12">
    <property type="entry name" value="DNA-directed RNA polymerase, insert domain"/>
    <property type="match status" value="1"/>
</dbReference>
<dbReference type="Gene3D" id="3.30.1360.10">
    <property type="entry name" value="RNA polymerase, RBP11-like subunit"/>
    <property type="match status" value="1"/>
</dbReference>
<dbReference type="HAMAP" id="MF_00059">
    <property type="entry name" value="RNApol_bact_RpoA"/>
    <property type="match status" value="1"/>
</dbReference>
<dbReference type="InterPro" id="IPR011262">
    <property type="entry name" value="DNA-dir_RNA_pol_insert"/>
</dbReference>
<dbReference type="InterPro" id="IPR011263">
    <property type="entry name" value="DNA-dir_RNA_pol_RpoA/D/Rpb3"/>
</dbReference>
<dbReference type="InterPro" id="IPR011773">
    <property type="entry name" value="DNA-dir_RpoA"/>
</dbReference>
<dbReference type="InterPro" id="IPR036603">
    <property type="entry name" value="RBP11-like"/>
</dbReference>
<dbReference type="InterPro" id="IPR011260">
    <property type="entry name" value="RNAP_asu_C"/>
</dbReference>
<dbReference type="InterPro" id="IPR036643">
    <property type="entry name" value="RNApol_insert_sf"/>
</dbReference>
<dbReference type="NCBIfam" id="NF003513">
    <property type="entry name" value="PRK05182.1-2"/>
    <property type="match status" value="1"/>
</dbReference>
<dbReference type="NCBIfam" id="NF003519">
    <property type="entry name" value="PRK05182.2-5"/>
    <property type="match status" value="1"/>
</dbReference>
<dbReference type="NCBIfam" id="TIGR02027">
    <property type="entry name" value="rpoA"/>
    <property type="match status" value="1"/>
</dbReference>
<dbReference type="Pfam" id="PF01000">
    <property type="entry name" value="RNA_pol_A_bac"/>
    <property type="match status" value="1"/>
</dbReference>
<dbReference type="Pfam" id="PF03118">
    <property type="entry name" value="RNA_pol_A_CTD"/>
    <property type="match status" value="1"/>
</dbReference>
<dbReference type="Pfam" id="PF01193">
    <property type="entry name" value="RNA_pol_L"/>
    <property type="match status" value="1"/>
</dbReference>
<dbReference type="SMART" id="SM00662">
    <property type="entry name" value="RPOLD"/>
    <property type="match status" value="1"/>
</dbReference>
<dbReference type="SUPFAM" id="SSF47789">
    <property type="entry name" value="C-terminal domain of RNA polymerase alpha subunit"/>
    <property type="match status" value="1"/>
</dbReference>
<dbReference type="SUPFAM" id="SSF56553">
    <property type="entry name" value="Insert subdomain of RNA polymerase alpha subunit"/>
    <property type="match status" value="1"/>
</dbReference>
<dbReference type="SUPFAM" id="SSF55257">
    <property type="entry name" value="RBP11-like subunits of RNA polymerase"/>
    <property type="match status" value="1"/>
</dbReference>
<sequence>MTVTISQVLRPRGPQIERLTENRAKVVLEPLGRGYAHTLGNALRRVLLSSIPGSAITQVEIDGVLHEYTTVEGLQEDVLEVLLNLKDVAIRIHSGDTATLSLFKQGAGVVTAADIKTDHNVEIINDGHVICHLTKDTTINMRLKVERGFGYQPAVVRRRPDDENRTIGRLILDASFSPVRRVAYVVEAARVEQRTDLDKLIIDIETNGTIDAEEALRTAADILTDQLSVFGDFTHRDRGTVKPASSGVDPVLLRPIDDLELTVRSANCLKAESIYYIGDLIQKTEVELLKTPNLGKKSLTEIKEVLGQRGLGLGVKLENWPPPGVSQYGMLG</sequence>
<proteinExistence type="inferred from homology"/>
<gene>
    <name evidence="1" type="primary">rpoA</name>
    <name type="ordered locus">Xfasm12_0518</name>
</gene>
<name>RPOA_XYLFM</name>
<comment type="function">
    <text evidence="1">DNA-dependent RNA polymerase catalyzes the transcription of DNA into RNA using the four ribonucleoside triphosphates as substrates.</text>
</comment>
<comment type="catalytic activity">
    <reaction evidence="1">
        <text>RNA(n) + a ribonucleoside 5'-triphosphate = RNA(n+1) + diphosphate</text>
        <dbReference type="Rhea" id="RHEA:21248"/>
        <dbReference type="Rhea" id="RHEA-COMP:14527"/>
        <dbReference type="Rhea" id="RHEA-COMP:17342"/>
        <dbReference type="ChEBI" id="CHEBI:33019"/>
        <dbReference type="ChEBI" id="CHEBI:61557"/>
        <dbReference type="ChEBI" id="CHEBI:140395"/>
        <dbReference type="EC" id="2.7.7.6"/>
    </reaction>
</comment>
<comment type="subunit">
    <text evidence="1">Homodimer. The RNAP catalytic core consists of 2 alpha, 1 beta, 1 beta' and 1 omega subunit. When a sigma factor is associated with the core the holoenzyme is formed, which can initiate transcription.</text>
</comment>
<comment type="domain">
    <text evidence="1">The N-terminal domain is essential for RNAP assembly and basal transcription, whereas the C-terminal domain is involved in interaction with transcriptional regulators and with upstream promoter elements.</text>
</comment>
<comment type="similarity">
    <text evidence="1">Belongs to the RNA polymerase alpha chain family.</text>
</comment>
<evidence type="ECO:0000255" key="1">
    <source>
        <dbReference type="HAMAP-Rule" id="MF_00059"/>
    </source>
</evidence>
<organism>
    <name type="scientific">Xylella fastidiosa (strain M12)</name>
    <dbReference type="NCBI Taxonomy" id="405440"/>
    <lineage>
        <taxon>Bacteria</taxon>
        <taxon>Pseudomonadati</taxon>
        <taxon>Pseudomonadota</taxon>
        <taxon>Gammaproteobacteria</taxon>
        <taxon>Lysobacterales</taxon>
        <taxon>Lysobacteraceae</taxon>
        <taxon>Xylella</taxon>
    </lineage>
</organism>